<feature type="chain" id="PRO_0000279602" description="RNA-directed RNA polymerase catalytic subunit">
    <location>
        <begin position="1"/>
        <end position="757"/>
    </location>
</feature>
<feature type="domain" description="RdRp catalytic" evidence="1">
    <location>
        <begin position="286"/>
        <end position="483"/>
    </location>
</feature>
<feature type="region of interest" description="Disordered" evidence="2">
    <location>
        <begin position="50"/>
        <end position="82"/>
    </location>
</feature>
<feature type="region of interest" description="Promoter-binding site" evidence="1">
    <location>
        <begin position="249"/>
        <end position="256"/>
    </location>
</feature>
<feature type="short sequence motif" description="Nuclear localization signal" evidence="1">
    <location>
        <begin position="187"/>
        <end position="195"/>
    </location>
</feature>
<feature type="short sequence motif" description="Nuclear localization signal" evidence="1">
    <location>
        <begin position="203"/>
        <end position="216"/>
    </location>
</feature>
<feature type="compositionally biased region" description="Polar residues" evidence="2">
    <location>
        <begin position="55"/>
        <end position="64"/>
    </location>
</feature>
<gene>
    <name evidence="1" type="primary">PB1</name>
</gene>
<protein>
    <recommendedName>
        <fullName evidence="1">RNA-directed RNA polymerase catalytic subunit</fullName>
        <ecNumber evidence="1">2.7.7.48</ecNumber>
    </recommendedName>
    <alternativeName>
        <fullName evidence="1">Polymerase basic protein 1</fullName>
        <shortName evidence="1">PB1</shortName>
    </alternativeName>
    <alternativeName>
        <fullName evidence="1">RNA-directed RNA polymerase subunit P1</fullName>
    </alternativeName>
</protein>
<dbReference type="EC" id="2.7.7.48" evidence="1"/>
<dbReference type="EMBL" id="CY002502">
    <property type="protein sequence ID" value="AAZ80015.1"/>
    <property type="molecule type" value="Genomic_RNA"/>
</dbReference>
<dbReference type="SMR" id="Q3YPY7"/>
<dbReference type="Proteomes" id="UP000154307">
    <property type="component" value="Genome"/>
</dbReference>
<dbReference type="GO" id="GO:0030430">
    <property type="term" value="C:host cell cytoplasm"/>
    <property type="evidence" value="ECO:0007669"/>
    <property type="project" value="UniProtKB-SubCell"/>
</dbReference>
<dbReference type="GO" id="GO:0042025">
    <property type="term" value="C:host cell nucleus"/>
    <property type="evidence" value="ECO:0007669"/>
    <property type="project" value="UniProtKB-SubCell"/>
</dbReference>
<dbReference type="GO" id="GO:0000166">
    <property type="term" value="F:nucleotide binding"/>
    <property type="evidence" value="ECO:0007669"/>
    <property type="project" value="UniProtKB-UniRule"/>
</dbReference>
<dbReference type="GO" id="GO:0003723">
    <property type="term" value="F:RNA binding"/>
    <property type="evidence" value="ECO:0007669"/>
    <property type="project" value="InterPro"/>
</dbReference>
<dbReference type="GO" id="GO:0003968">
    <property type="term" value="F:RNA-directed RNA polymerase activity"/>
    <property type="evidence" value="ECO:0007669"/>
    <property type="project" value="UniProtKB-UniRule"/>
</dbReference>
<dbReference type="GO" id="GO:0006351">
    <property type="term" value="P:DNA-templated transcription"/>
    <property type="evidence" value="ECO:0007669"/>
    <property type="project" value="UniProtKB-UniRule"/>
</dbReference>
<dbReference type="GO" id="GO:0039657">
    <property type="term" value="P:symbiont-mediated suppression of host gene expression"/>
    <property type="evidence" value="ECO:0007669"/>
    <property type="project" value="UniProtKB-KW"/>
</dbReference>
<dbReference type="GO" id="GO:0039523">
    <property type="term" value="P:symbiont-mediated suppression of host mRNA transcription via inhibition of RNA polymerase II activity"/>
    <property type="evidence" value="ECO:0007669"/>
    <property type="project" value="UniProtKB-UniRule"/>
</dbReference>
<dbReference type="GO" id="GO:0039694">
    <property type="term" value="P:viral RNA genome replication"/>
    <property type="evidence" value="ECO:0007669"/>
    <property type="project" value="UniProtKB-UniRule"/>
</dbReference>
<dbReference type="GO" id="GO:0019083">
    <property type="term" value="P:viral transcription"/>
    <property type="evidence" value="ECO:0007669"/>
    <property type="project" value="UniProtKB-KW"/>
</dbReference>
<dbReference type="Gene3D" id="6.10.140.720">
    <property type="match status" value="1"/>
</dbReference>
<dbReference type="HAMAP" id="MF_04065">
    <property type="entry name" value="INFV_RDRP"/>
    <property type="match status" value="1"/>
</dbReference>
<dbReference type="InterPro" id="IPR007099">
    <property type="entry name" value="RNA-dir_pol_NSvirus"/>
</dbReference>
<dbReference type="InterPro" id="IPR001407">
    <property type="entry name" value="RNA_pol_PB1_influenza"/>
</dbReference>
<dbReference type="Pfam" id="PF00602">
    <property type="entry name" value="Flu_PB1"/>
    <property type="match status" value="1"/>
</dbReference>
<dbReference type="PIRSF" id="PIRSF000827">
    <property type="entry name" value="RdRPol_OMV"/>
    <property type="match status" value="1"/>
</dbReference>
<dbReference type="PROSITE" id="PS50525">
    <property type="entry name" value="RDRP_SSRNA_NEG_SEG"/>
    <property type="match status" value="1"/>
</dbReference>
<proteinExistence type="inferred from homology"/>
<sequence>MDVNPTLLFLKVPAQNAISTTFPYTGDPPYSHGTGTGYTMDTVNRTHQYSEKGKWTTNTETGAPQLNPIDGPLPEDNEPSGYAQTDCVLEAMAFLEESHPGIFENSCLETMEVVQQTRVDRLTQGRQTYDWTLNRNQPAATALANTIEVFRSNGLTANESGRLIDFLKDVMESMDKEEMEITTHFQRKRRVRDNMTKKMVTQRTIGKKKQRVNKRSYLIRALTLNTMTKDAERGKLKRRAIATPGMQIRGFVYFVETLARSICEKLEQSGLPVGGNEKKAKLANVVRKMMTNSQDTELSFTITGDNTKWNENQNPRMFLAMITYITKNQPEWFRNVLSIAPIMFSNKMARLGKGYMFESKSMKLRTQIPAEMLASIDLKYFNESTRKKIEKIRPLLIDGTASLSPGMMMGMFNMLSTVLGVSILNLGQKRYTKTTYWWDGLQSSDDFALIVNAPNHEGIQAGVDRFYRTCKLVGINMSKKKSYINRTGTFEFTSFFYRYGFVANFSMELPSFGVSGINESADMSIGVTVIKNNMINNDLGPATAQMALQLFIKDYRYTYRCHRGDTQIQTRRSFELKKLWEQTRSKAGLLVSDGGPNLYNIRNLHIPEVCLKWELMDEDYQGRLCNPLNPFVSHKEIESVNNAVVMPAHGPAKSMEYDAVATTHSWIPKRNRSILNTSQRGILEDEQMYQKCCNLFEKFFPSSSYRRPVGISSMVEAMVSRARIDARIDFESGRIKKEEFAEIMKTCSTIEELRRQK</sequence>
<organismHost>
    <name type="scientific">Aves</name>
    <dbReference type="NCBI Taxonomy" id="8782"/>
</organismHost>
<organismHost>
    <name type="scientific">Cetacea</name>
    <name type="common">whales</name>
    <dbReference type="NCBI Taxonomy" id="9721"/>
</organismHost>
<organismHost>
    <name type="scientific">Homo sapiens</name>
    <name type="common">Human</name>
    <dbReference type="NCBI Taxonomy" id="9606"/>
</organismHost>
<organismHost>
    <name type="scientific">Phocidae</name>
    <name type="common">true seals</name>
    <dbReference type="NCBI Taxonomy" id="9709"/>
</organismHost>
<organismHost>
    <name type="scientific">Sus scrofa</name>
    <name type="common">Pig</name>
    <dbReference type="NCBI Taxonomy" id="9823"/>
</organismHost>
<name>RDRP_I71A1</name>
<keyword id="KW-1262">Eukaryotic host gene expression shutoff by virus</keyword>
<keyword id="KW-1191">Eukaryotic host transcription shutoff by virus</keyword>
<keyword id="KW-1035">Host cytoplasm</keyword>
<keyword id="KW-1190">Host gene expression shutoff by virus</keyword>
<keyword id="KW-1048">Host nucleus</keyword>
<keyword id="KW-0945">Host-virus interaction</keyword>
<keyword id="KW-1104">Inhibition of host RNA polymerase II by virus</keyword>
<keyword id="KW-0547">Nucleotide-binding</keyword>
<keyword id="KW-0548">Nucleotidyltransferase</keyword>
<keyword id="KW-0597">Phosphoprotein</keyword>
<keyword id="KW-0696">RNA-directed RNA polymerase</keyword>
<keyword id="KW-0808">Transferase</keyword>
<keyword id="KW-0693">Viral RNA replication</keyword>
<keyword id="KW-1195">Viral transcription</keyword>
<reference key="1">
    <citation type="submission" date="2005-08" db="EMBL/GenBank/DDBJ databases">
        <title>The NIAID influenza genome sequencing project.</title>
        <authorList>
            <person name="Ghedin E."/>
            <person name="Spiro D."/>
            <person name="Miller N."/>
            <person name="Zaborsky J."/>
            <person name="Feldblyum T."/>
            <person name="Subbu V."/>
            <person name="Shumway M."/>
            <person name="Sparenborg J."/>
            <person name="Groveman L."/>
            <person name="Halpin R."/>
            <person name="Sitz J."/>
            <person name="Koo H."/>
            <person name="Salzberg S.L."/>
            <person name="Webster R.G."/>
            <person name="Hoffmann E."/>
            <person name="Krauss S."/>
            <person name="Naeve C."/>
            <person name="Bao Y."/>
            <person name="Bolotov P."/>
            <person name="Dernovoy D."/>
            <person name="Kiryutin B."/>
            <person name="Lipman D.J."/>
            <person name="Tatusova T."/>
        </authorList>
    </citation>
    <scope>NUCLEOTIDE SEQUENCE [GENOMIC RNA]</scope>
</reference>
<organism>
    <name type="scientific">Influenza A virus (strain A/Memphis/1/1971 H3N2)</name>
    <dbReference type="NCBI Taxonomy" id="383586"/>
    <lineage>
        <taxon>Viruses</taxon>
        <taxon>Riboviria</taxon>
        <taxon>Orthornavirae</taxon>
        <taxon>Negarnaviricota</taxon>
        <taxon>Polyploviricotina</taxon>
        <taxon>Insthoviricetes</taxon>
        <taxon>Articulavirales</taxon>
        <taxon>Orthomyxoviridae</taxon>
        <taxon>Alphainfluenzavirus</taxon>
        <taxon>Alphainfluenzavirus influenzae</taxon>
        <taxon>Influenza A virus</taxon>
    </lineage>
</organism>
<accession>Q3YPY7</accession>
<comment type="function">
    <text evidence="1">RNA-dependent RNA polymerase which is responsible for replication and transcription of virus RNA segments. The transcription of viral mRNAs occurs by a unique mechanism called cap-snatching. 5' methylated caps of cellular mRNAs are cleaved after 10-13 nucleotides by PA. In turn, these short capped RNAs are used as primers by PB1 for transcription of viral mRNAs. During virus replication, PB1 initiates RNA synthesis and copy vRNA into complementary RNA (cRNA) which in turn serves as a template for the production of more vRNAs.</text>
</comment>
<comment type="catalytic activity">
    <reaction evidence="1">
        <text>RNA(n) + a ribonucleoside 5'-triphosphate = RNA(n+1) + diphosphate</text>
        <dbReference type="Rhea" id="RHEA:21248"/>
        <dbReference type="Rhea" id="RHEA-COMP:14527"/>
        <dbReference type="Rhea" id="RHEA-COMP:17342"/>
        <dbReference type="ChEBI" id="CHEBI:33019"/>
        <dbReference type="ChEBI" id="CHEBI:61557"/>
        <dbReference type="ChEBI" id="CHEBI:140395"/>
        <dbReference type="EC" id="2.7.7.48"/>
    </reaction>
</comment>
<comment type="subunit">
    <text evidence="1">Influenza RNA polymerase is composed of three subunits: PB1, PB2 and PA. Interacts (via N-terminus) with PA (via C-terminus). Interacts (via C-terminus) with PB2 (via N-terminus); this interaction is essential for transcription initiation.</text>
</comment>
<comment type="subcellular location">
    <subcellularLocation>
        <location evidence="1">Host nucleus</location>
    </subcellularLocation>
    <subcellularLocation>
        <location evidence="1">Host cytoplasm</location>
    </subcellularLocation>
</comment>
<comment type="PTM">
    <text evidence="1">Phosphorylated by host PRKCA.</text>
</comment>
<comment type="similarity">
    <text evidence="1">Belongs to the influenza viruses polymerase PB1 family.</text>
</comment>
<evidence type="ECO:0000255" key="1">
    <source>
        <dbReference type="HAMAP-Rule" id="MF_04065"/>
    </source>
</evidence>
<evidence type="ECO:0000256" key="2">
    <source>
        <dbReference type="SAM" id="MobiDB-lite"/>
    </source>
</evidence>